<keyword id="KW-0963">Cytoplasm</keyword>
<keyword id="KW-0903">Direct protein sequencing</keyword>
<keyword id="KW-0324">Glycolysis</keyword>
<keyword id="KW-0418">Kinase</keyword>
<keyword id="KW-0460">Magnesium</keyword>
<keyword id="KW-0479">Metal-binding</keyword>
<keyword id="KW-1185">Reference proteome</keyword>
<keyword id="KW-0808">Transferase</keyword>
<dbReference type="EC" id="2.7.1.90" evidence="1"/>
<dbReference type="EMBL" id="DS113373">
    <property type="protein sequence ID" value="EAY08668.1"/>
    <property type="status" value="ALT_SEQ"/>
    <property type="molecule type" value="Genomic_DNA"/>
</dbReference>
<dbReference type="EMBL" id="AF053370">
    <property type="protein sequence ID" value="AAD13345.1"/>
    <property type="molecule type" value="Genomic_DNA"/>
</dbReference>
<dbReference type="RefSeq" id="XP_001320891.1">
    <property type="nucleotide sequence ID" value="XM_001320856.1"/>
</dbReference>
<dbReference type="SMR" id="A2EF58"/>
<dbReference type="STRING" id="5722.A2EF58"/>
<dbReference type="KEGG" id="tva:TVAG_2v1029980"/>
<dbReference type="VEuPathDB" id="TrichDB:TVAG_079260"/>
<dbReference type="VEuPathDB" id="TrichDB:TVAGG3_1029980"/>
<dbReference type="eggNOG" id="KOG2440">
    <property type="taxonomic scope" value="Eukaryota"/>
</dbReference>
<dbReference type="InParanoid" id="A2EF58"/>
<dbReference type="OrthoDB" id="537915at2759"/>
<dbReference type="UniPathway" id="UPA00109">
    <property type="reaction ID" value="UER00182"/>
</dbReference>
<dbReference type="Proteomes" id="UP000001542">
    <property type="component" value="Unassembled WGS sequence"/>
</dbReference>
<dbReference type="GO" id="GO:0005737">
    <property type="term" value="C:cytoplasm"/>
    <property type="evidence" value="ECO:0007669"/>
    <property type="project" value="UniProtKB-SubCell"/>
</dbReference>
<dbReference type="GO" id="GO:0003872">
    <property type="term" value="F:6-phosphofructokinase activity"/>
    <property type="evidence" value="ECO:0007669"/>
    <property type="project" value="InterPro"/>
</dbReference>
<dbReference type="GO" id="GO:0047334">
    <property type="term" value="F:diphosphate-fructose-6-phosphate 1-phosphotransferase activity"/>
    <property type="evidence" value="ECO:0007669"/>
    <property type="project" value="UniProtKB-EC"/>
</dbReference>
<dbReference type="GO" id="GO:0046872">
    <property type="term" value="F:metal ion binding"/>
    <property type="evidence" value="ECO:0007669"/>
    <property type="project" value="UniProtKB-KW"/>
</dbReference>
<dbReference type="GO" id="GO:0008443">
    <property type="term" value="F:phosphofructokinase activity"/>
    <property type="evidence" value="ECO:0000318"/>
    <property type="project" value="GO_Central"/>
</dbReference>
<dbReference type="GO" id="GO:0006002">
    <property type="term" value="P:fructose 6-phosphate metabolic process"/>
    <property type="evidence" value="ECO:0007669"/>
    <property type="project" value="InterPro"/>
</dbReference>
<dbReference type="GO" id="GO:0009749">
    <property type="term" value="P:response to glucose"/>
    <property type="evidence" value="ECO:0000318"/>
    <property type="project" value="GO_Central"/>
</dbReference>
<dbReference type="FunFam" id="3.40.50.450:FF:000039">
    <property type="entry name" value="Pyrophosphate--fructose 6-phosphate 1-phosphotransferase"/>
    <property type="match status" value="1"/>
</dbReference>
<dbReference type="FunFam" id="3.40.50.460:FF:000020">
    <property type="entry name" value="Pyrophosphate--fructose 6-phosphate 1-phosphotransferase 1"/>
    <property type="match status" value="1"/>
</dbReference>
<dbReference type="Gene3D" id="3.40.50.450">
    <property type="match status" value="1"/>
</dbReference>
<dbReference type="Gene3D" id="3.40.50.460">
    <property type="entry name" value="Phosphofructokinase domain"/>
    <property type="match status" value="1"/>
</dbReference>
<dbReference type="HAMAP" id="MF_01979">
    <property type="entry name" value="Phosphofructokinase_II_Short"/>
    <property type="match status" value="1"/>
</dbReference>
<dbReference type="InterPro" id="IPR022953">
    <property type="entry name" value="ATP_PFK"/>
</dbReference>
<dbReference type="InterPro" id="IPR000023">
    <property type="entry name" value="Phosphofructokinase_dom"/>
</dbReference>
<dbReference type="InterPro" id="IPR035966">
    <property type="entry name" value="PKF_sf"/>
</dbReference>
<dbReference type="InterPro" id="IPR011403">
    <property type="entry name" value="PPi-PFK_TM0289"/>
</dbReference>
<dbReference type="PANTHER" id="PTHR43650">
    <property type="entry name" value="PYROPHOSPHATE--FRUCTOSE 6-PHOSPHATE 1-PHOSPHOTRANSFERASE"/>
    <property type="match status" value="1"/>
</dbReference>
<dbReference type="PANTHER" id="PTHR43650:SF1">
    <property type="entry name" value="PYROPHOSPHATE--FRUCTOSE 6-PHOSPHATE 1-PHOSPHOTRANSFERASE SUBUNIT BETA 2"/>
    <property type="match status" value="1"/>
</dbReference>
<dbReference type="Pfam" id="PF00365">
    <property type="entry name" value="PFK"/>
    <property type="match status" value="1"/>
</dbReference>
<dbReference type="PIRSF" id="PIRSF036482">
    <property type="entry name" value="PPi_PFK_TM0289"/>
    <property type="match status" value="1"/>
</dbReference>
<dbReference type="PRINTS" id="PR00476">
    <property type="entry name" value="PHFRCTKINASE"/>
</dbReference>
<dbReference type="SUPFAM" id="SSF53784">
    <property type="entry name" value="Phosphofructokinase"/>
    <property type="match status" value="1"/>
</dbReference>
<evidence type="ECO:0000255" key="1">
    <source>
        <dbReference type="HAMAP-Rule" id="MF_01979"/>
    </source>
</evidence>
<evidence type="ECO:0000269" key="2">
    <source>
    </source>
</evidence>
<evidence type="ECO:0000269" key="3">
    <source>
    </source>
</evidence>
<evidence type="ECO:0000305" key="4"/>
<gene>
    <name type="primary">pfk3</name>
    <name type="ORF">TVAG_079260</name>
</gene>
<reference key="1">
    <citation type="journal article" date="2007" name="Science">
        <title>Draft genome sequence of the sexually transmitted pathogen Trichomonas vaginalis.</title>
        <authorList>
            <person name="Carlton J.M."/>
            <person name="Hirt R.P."/>
            <person name="Silva J.C."/>
            <person name="Delcher A.L."/>
            <person name="Schatz M."/>
            <person name="Zhao Q."/>
            <person name="Wortman J.R."/>
            <person name="Bidwell S.L."/>
            <person name="Alsmark U.C.M."/>
            <person name="Besteiro S."/>
            <person name="Sicheritz-Ponten T."/>
            <person name="Noel C.J."/>
            <person name="Dacks J.B."/>
            <person name="Foster P.G."/>
            <person name="Simillion C."/>
            <person name="Van de Peer Y."/>
            <person name="Miranda-Saavedra D."/>
            <person name="Barton G.J."/>
            <person name="Westrop G.D."/>
            <person name="Mueller S."/>
            <person name="Dessi D."/>
            <person name="Fiori P.L."/>
            <person name="Ren Q."/>
            <person name="Paulsen I."/>
            <person name="Zhang H."/>
            <person name="Bastida-Corcuera F.D."/>
            <person name="Simoes-Barbosa A."/>
            <person name="Brown M.T."/>
            <person name="Hayes R.D."/>
            <person name="Mukherjee M."/>
            <person name="Okumura C.Y."/>
            <person name="Schneider R."/>
            <person name="Smith A.J."/>
            <person name="Vanacova S."/>
            <person name="Villalvazo M."/>
            <person name="Haas B.J."/>
            <person name="Pertea M."/>
            <person name="Feldblyum T.V."/>
            <person name="Utterback T.R."/>
            <person name="Shu C.L."/>
            <person name="Osoegawa K."/>
            <person name="de Jong P.J."/>
            <person name="Hrdy I."/>
            <person name="Horvathova L."/>
            <person name="Zubacova Z."/>
            <person name="Dolezal P."/>
            <person name="Malik S.B."/>
            <person name="Logsdon J.M. Jr."/>
            <person name="Henze K."/>
            <person name="Gupta A."/>
            <person name="Wang C.C."/>
            <person name="Dunne R.L."/>
            <person name="Upcroft J.A."/>
            <person name="Upcroft P."/>
            <person name="White O."/>
            <person name="Salzberg S.L."/>
            <person name="Tang P."/>
            <person name="Chiu C.-H."/>
            <person name="Lee Y.-S."/>
            <person name="Embley T.M."/>
            <person name="Coombs G.H."/>
            <person name="Mottram J.C."/>
            <person name="Tachezy J."/>
            <person name="Fraser-Liggett C.M."/>
            <person name="Johnson P.J."/>
        </authorList>
    </citation>
    <scope>NUCLEOTIDE SEQUENCE [LARGE SCALE GENOMIC DNA]</scope>
    <source>
        <strain>ATCC PRA-98 / G3</strain>
    </source>
</reference>
<reference key="2">
    <citation type="journal article" date="1998" name="J. Mol. Evol.">
        <title>The pyrophosphate-dependent phosphofructokinase of the protist, Trichomonas vaginalis, and the evolutionary relationships of protist phosphofructokinases.</title>
        <authorList>
            <person name="Mertens E."/>
            <person name="Ladror U.S."/>
            <person name="Lee J.A."/>
            <person name="Miretsky A."/>
            <person name="Morris A."/>
            <person name="Rozario C."/>
            <person name="Kemp R.G."/>
            <person name="Muller M."/>
        </authorList>
    </citation>
    <scope>NUCLEOTIDE SEQUENCE [GENOMIC DNA] OF 1-211</scope>
    <scope>PROTEIN SEQUENCE OF 107-131; 140-160; 169-175 AND 180-204</scope>
    <scope>SUBUNIT</scope>
    <source>
        <strain>ATCC 30001 / NIH C1</strain>
    </source>
</reference>
<reference key="3">
    <citation type="journal article" date="1989" name="Mol. Biochem. Parasitol.">
        <title>Presence of a fructose-2,6-bisphosphate-insensitive pyrophosphate: fructose-6-phosphate phosphotransferase in the anaerobic protozoa Tritrichomonas foetus, Trichomonas vaginalis and Isotricha prostoma.</title>
        <authorList>
            <person name="Mertens E."/>
            <person name="Van Schaftingen E."/>
            <person name="Muller M."/>
        </authorList>
    </citation>
    <scope>FUNCTION</scope>
    <scope>CATALYTIC ACTIVITY</scope>
    <source>
        <strain>ATCC 30001 / NIH C1</strain>
    </source>
</reference>
<feature type="chain" id="PRO_0000429704" description="Pyrophosphate--fructose 6-phosphate 1-phosphotransferase 3">
    <location>
        <begin position="1"/>
        <end position="387"/>
    </location>
</feature>
<feature type="active site" description="Proton acceptor" evidence="1">
    <location>
        <position position="142"/>
    </location>
</feature>
<feature type="binding site" evidence="1">
    <location>
        <position position="15"/>
    </location>
    <ligand>
        <name>diphosphate</name>
        <dbReference type="ChEBI" id="CHEBI:33019"/>
    </ligand>
</feature>
<feature type="binding site" evidence="1">
    <location>
        <position position="114"/>
    </location>
    <ligand>
        <name>Mg(2+)</name>
        <dbReference type="ChEBI" id="CHEBI:18420"/>
        <note>catalytic</note>
    </ligand>
</feature>
<feature type="binding site" evidence="1">
    <location>
        <begin position="140"/>
        <end position="142"/>
    </location>
    <ligand>
        <name>substrate</name>
    </ligand>
</feature>
<feature type="binding site" evidence="1">
    <location>
        <begin position="186"/>
        <end position="188"/>
    </location>
    <ligand>
        <name>substrate</name>
    </ligand>
</feature>
<feature type="binding site" evidence="1">
    <location>
        <position position="247"/>
    </location>
    <ligand>
        <name>substrate</name>
    </ligand>
</feature>
<feature type="binding site" evidence="1">
    <location>
        <begin position="308"/>
        <end position="311"/>
    </location>
    <ligand>
        <name>substrate</name>
    </ligand>
</feature>
<feature type="site" description="Important for catalytic activity and substrate specificity; stabilizes the transition state when the phosphoryl donor is PPi; prevents ATP from binding by mimicking the alpha-phosphate group of ATP" evidence="1">
    <location>
        <position position="115"/>
    </location>
</feature>
<feature type="site" description="Important for catalytic activity; stabilizes the transition state when the phosphoryl donor is PPi" evidence="1">
    <location>
        <position position="139"/>
    </location>
</feature>
<feature type="non-terminal residue">
    <location>
        <position position="387"/>
    </location>
</feature>
<organism>
    <name type="scientific">Trichomonas vaginalis (strain ATCC PRA-98 / G3)</name>
    <dbReference type="NCBI Taxonomy" id="412133"/>
    <lineage>
        <taxon>Eukaryota</taxon>
        <taxon>Metamonada</taxon>
        <taxon>Parabasalia</taxon>
        <taxon>Trichomonadida</taxon>
        <taxon>Trichomonadidae</taxon>
        <taxon>Trichomonas</taxon>
    </lineage>
</organism>
<protein>
    <recommendedName>
        <fullName evidence="1">Pyrophosphate--fructose 6-phosphate 1-phosphotransferase 3</fullName>
        <ecNumber evidence="1">2.7.1.90</ecNumber>
    </recommendedName>
    <alternativeName>
        <fullName evidence="1">6-phosphofructokinase, pyrophosphate dependent 3</fullName>
    </alternativeName>
    <alternativeName>
        <fullName evidence="1">PPi-dependent phosphofructokinase 3</fullName>
        <shortName evidence="1">PPi-PFK 3</shortName>
    </alternativeName>
    <alternativeName>
        <fullName evidence="1">Pyrophosphate-dependent 6-phosphofructose-1-kinase 3</fullName>
    </alternativeName>
</protein>
<sequence length="387" mass="42272">MSAEAPVLGILCGGGPAPGLNGVIAGATLYALRLGWKVIGFMEGFKYLCTGDVDVVKAHTIDLTYDIVSRIHFQGGTIIQTSRANPRKSTELQENVRKCLRALKVRYFLTIGGDDTASSAVSVAQGMDGNEISVISCPKTIDNDLPLPSDQSTFGFHTARSLGMEIIRNLMVDSKSAPRWFLVEAMGRSAGHLALGMAEASGAHLCLIPEEFKQDEIEFEDVVELVEATILKRLAYGKNYGVCVLAEGLVSKMSKKALYRLFGNREPPTDPHGHILLDDAELARSLSEELLKRLGNLGIRITPKKIGYELRCADPVAFDAVYTRELGYGAIDAFLNGHSAALIVRENGQVKPVQFKDLLDPATGRVRTRLVDVTSQSFKVARVYMWR</sequence>
<accession>A2EF58</accession>
<accession>O61116</accession>
<name>PFP3_TRIV3</name>
<comment type="function">
    <text evidence="1 2">Catalyzes the phosphorylation of D-fructose 6-phosphate, the first committing step of glycolysis. Uses inorganic phosphate (PPi) as phosphoryl donor instead of ATP like common ATP-dependent phosphofructokinases (ATP-PFKs), which renders the reaction reversible, and can thus function both in glycolysis and gluconeogenesis. Consistently, PPi-PFK can replace the enzymes of both the forward (ATP-PFK) and reverse (fructose-bisphosphatase (FBPase)) reactions.</text>
</comment>
<comment type="catalytic activity">
    <reaction evidence="1 2">
        <text>beta-D-fructose 6-phosphate + diphosphate = beta-D-fructose 1,6-bisphosphate + phosphate + H(+)</text>
        <dbReference type="Rhea" id="RHEA:13613"/>
        <dbReference type="ChEBI" id="CHEBI:15378"/>
        <dbReference type="ChEBI" id="CHEBI:32966"/>
        <dbReference type="ChEBI" id="CHEBI:33019"/>
        <dbReference type="ChEBI" id="CHEBI:43474"/>
        <dbReference type="ChEBI" id="CHEBI:57634"/>
        <dbReference type="EC" id="2.7.1.90"/>
    </reaction>
</comment>
<comment type="cofactor">
    <cofactor evidence="1">
        <name>Mg(2+)</name>
        <dbReference type="ChEBI" id="CHEBI:18420"/>
    </cofactor>
</comment>
<comment type="activity regulation">
    <text evidence="1">Non-allosteric.</text>
</comment>
<comment type="pathway">
    <text evidence="1">Carbohydrate degradation; glycolysis; D-glyceraldehyde 3-phosphate and glycerone phosphate from D-glucose: step 3/4.</text>
</comment>
<comment type="subunit">
    <text evidence="1 3">Homotetramer.</text>
</comment>
<comment type="subcellular location">
    <subcellularLocation>
        <location evidence="1">Cytoplasm</location>
    </subcellularLocation>
</comment>
<comment type="similarity">
    <text evidence="1">Belongs to the phosphofructokinase type A (PFKA) family. PPi-dependent PFK group II subfamily. Clade 'Short' sub-subfamily.</text>
</comment>
<comment type="sequence caution" evidence="4">
    <conflict type="miscellaneous discrepancy">
        <sequence resource="EMBL-CDS" id="EAY08668"/>
    </conflict>
    <text>Translation C-terminally shortened because of gaps in the genomic sequence.</text>
</comment>
<proteinExistence type="evidence at protein level"/>